<comment type="function">
    <text>Provides the precursors necessary for DNA synthesis. Catalyzes the biosynthesis of deoxyribonucleotides from the corresponding ribonucleotides. Inhibits Wnt signaling.</text>
</comment>
<comment type="catalytic activity">
    <reaction evidence="3">
        <text>a 2'-deoxyribonucleoside 5'-diphosphate + [thioredoxin]-disulfide + H2O = a ribonucleoside 5'-diphosphate + [thioredoxin]-dithiol</text>
        <dbReference type="Rhea" id="RHEA:23252"/>
        <dbReference type="Rhea" id="RHEA-COMP:10698"/>
        <dbReference type="Rhea" id="RHEA-COMP:10700"/>
        <dbReference type="ChEBI" id="CHEBI:15377"/>
        <dbReference type="ChEBI" id="CHEBI:29950"/>
        <dbReference type="ChEBI" id="CHEBI:50058"/>
        <dbReference type="ChEBI" id="CHEBI:57930"/>
        <dbReference type="ChEBI" id="CHEBI:73316"/>
        <dbReference type="EC" id="1.17.4.1"/>
    </reaction>
</comment>
<comment type="cofactor">
    <cofactor evidence="1">
        <name>Fe cation</name>
        <dbReference type="ChEBI" id="CHEBI:24875"/>
    </cofactor>
    <text evidence="1">Binds 2 iron ions per subunit.</text>
</comment>
<comment type="subunit">
    <text evidence="4">Heterodimer of a large and a small subunit. Interacts (via Cy motif and when phosphorylated at Thr-33) with CCNF; the interaction occurs exclusively in G2 and early M (PubMed:22632967).</text>
</comment>
<comment type="interaction">
    <interactant intactId="EBI-2339245">
        <id>P31350</id>
    </interactant>
    <interactant intactId="EBI-1207574">
        <id>P41002</id>
        <label>CCNF</label>
    </interactant>
    <organismsDiffer>false</organismsDiffer>
    <experiments>12</experiments>
</comment>
<comment type="interaction">
    <interactant intactId="EBI-2339245">
        <id>P31350</id>
    </interactant>
    <interactant intactId="EBI-724997">
        <id>Q9UM11</id>
        <label>FZR1</label>
    </interactant>
    <organismsDiffer>false</organismsDiffer>
    <experiments>7</experiments>
</comment>
<comment type="interaction">
    <interactant intactId="EBI-2339245">
        <id>P31350</id>
    </interactant>
    <interactant intactId="EBI-717006">
        <id>P23921</id>
        <label>RRM1</label>
    </interactant>
    <organismsDiffer>false</organismsDiffer>
    <experiments>7</experiments>
</comment>
<comment type="interaction">
    <interactant intactId="EBI-2339245">
        <id>P31350</id>
    </interactant>
    <interactant intactId="EBI-727004">
        <id>O00560</id>
        <label>SDCBP</label>
    </interactant>
    <organismsDiffer>false</organismsDiffer>
    <experiments>3</experiments>
</comment>
<comment type="subcellular location">
    <subcellularLocation>
        <location evidence="4">Cytoplasm</location>
    </subcellularLocation>
    <subcellularLocation>
        <location evidence="4">Nucleus</location>
    </subcellularLocation>
    <text evidence="4">Localized to the cytoplasm in S phase cells. May localize to the nucleus in G2 phase cells.</text>
</comment>
<comment type="alternative products">
    <event type="alternative splicing"/>
    <isoform>
        <id>P31350-1</id>
        <name>1</name>
        <sequence type="displayed"/>
    </isoform>
    <isoform>
        <id>P31350-2</id>
        <name>2</name>
        <sequence type="described" ref="VSP_044917"/>
    </isoform>
</comment>
<comment type="induction">
    <text evidence="4">Up-regulated in response to DNA damage induced by doxorubicin, camptothecin, UV-C, methyl methanesulfonate, nocodazole, or gamma-irradiation.</text>
</comment>
<comment type="PTM">
    <text evidence="4">Phosphorylation on Ser-20 relieves the inhibitory effect on Wnt signaling. Phosphorylated on Thr-33 by CDK1 and CDK2; predominantly in G2 and M phase (PubMed:22632967).</text>
</comment>
<comment type="PTM">
    <text evidence="4">Ubiquitinated by the SCF(CCNF) E3 ubiquitin-protein ligase complex; leading to its degradation by the proteasome.</text>
</comment>
<comment type="miscellaneous">
    <text>Two distinct regulatory sites have been defined: the specificity site, which controls substrate specificity, and the activity site which regulates overall catalytic activity. A substrate-binding catalytic site, located on M1, is formed only in the presence of the second subunit M2.</text>
</comment>
<comment type="similarity">
    <text evidence="6">Belongs to the ribonucleoside diphosphate reductase small chain family.</text>
</comment>
<comment type="sequence caution" evidence="6">
    <conflict type="frameshift">
        <sequence resource="EMBL" id="DA477511"/>
    </conflict>
</comment>
<comment type="online information" name="Wikipedia">
    <link uri="https://en.wikipedia.org/wiki/Ribonucleotide_reductase"/>
    <text>Ribonucleotide reductase entry</text>
</comment>
<reference key="1">
    <citation type="journal article" date="1992" name="DNA Seq.">
        <title>Sequence analysis of the large and small subunits of human ribonucleotide reductase.</title>
        <authorList>
            <person name="Pavloff N."/>
            <person name="Rivard D."/>
            <person name="Masson S."/>
            <person name="Shen S.-H."/>
            <person name="Mes-Masson A.-M."/>
        </authorList>
    </citation>
    <scope>NUCLEOTIDE SEQUENCE [MRNA] (ISOFORM 1)</scope>
    <source>
        <tissue>Mammary carcinoma</tissue>
    </source>
</reference>
<reference key="2">
    <citation type="journal article" date="2001" name="Cytogenet. Cell Genet.">
        <title>Characterization of the human ribonucleotide reductase M2 subunit gene; genomic structure and promoter analyses.</title>
        <authorList>
            <person name="Zhou B."/>
            <person name="Yen Y."/>
        </authorList>
    </citation>
    <scope>NUCLEOTIDE SEQUENCE [GENOMIC DNA]</scope>
</reference>
<reference key="3">
    <citation type="journal article" date="2004" name="Nat. Genet.">
        <title>Complete sequencing and characterization of 21,243 full-length human cDNAs.</title>
        <authorList>
            <person name="Ota T."/>
            <person name="Suzuki Y."/>
            <person name="Nishikawa T."/>
            <person name="Otsuki T."/>
            <person name="Sugiyama T."/>
            <person name="Irie R."/>
            <person name="Wakamatsu A."/>
            <person name="Hayashi K."/>
            <person name="Sato H."/>
            <person name="Nagai K."/>
            <person name="Kimura K."/>
            <person name="Makita H."/>
            <person name="Sekine M."/>
            <person name="Obayashi M."/>
            <person name="Nishi T."/>
            <person name="Shibahara T."/>
            <person name="Tanaka T."/>
            <person name="Ishii S."/>
            <person name="Yamamoto J."/>
            <person name="Saito K."/>
            <person name="Kawai Y."/>
            <person name="Isono Y."/>
            <person name="Nakamura Y."/>
            <person name="Nagahari K."/>
            <person name="Murakami K."/>
            <person name="Yasuda T."/>
            <person name="Iwayanagi T."/>
            <person name="Wagatsuma M."/>
            <person name="Shiratori A."/>
            <person name="Sudo H."/>
            <person name="Hosoiri T."/>
            <person name="Kaku Y."/>
            <person name="Kodaira H."/>
            <person name="Kondo H."/>
            <person name="Sugawara M."/>
            <person name="Takahashi M."/>
            <person name="Kanda K."/>
            <person name="Yokoi T."/>
            <person name="Furuya T."/>
            <person name="Kikkawa E."/>
            <person name="Omura Y."/>
            <person name="Abe K."/>
            <person name="Kamihara K."/>
            <person name="Katsuta N."/>
            <person name="Sato K."/>
            <person name="Tanikawa M."/>
            <person name="Yamazaki M."/>
            <person name="Ninomiya K."/>
            <person name="Ishibashi T."/>
            <person name="Yamashita H."/>
            <person name="Murakawa K."/>
            <person name="Fujimori K."/>
            <person name="Tanai H."/>
            <person name="Kimata M."/>
            <person name="Watanabe M."/>
            <person name="Hiraoka S."/>
            <person name="Chiba Y."/>
            <person name="Ishida S."/>
            <person name="Ono Y."/>
            <person name="Takiguchi S."/>
            <person name="Watanabe S."/>
            <person name="Yosida M."/>
            <person name="Hotuta T."/>
            <person name="Kusano J."/>
            <person name="Kanehori K."/>
            <person name="Takahashi-Fujii A."/>
            <person name="Hara H."/>
            <person name="Tanase T.-O."/>
            <person name="Nomura Y."/>
            <person name="Togiya S."/>
            <person name="Komai F."/>
            <person name="Hara R."/>
            <person name="Takeuchi K."/>
            <person name="Arita M."/>
            <person name="Imose N."/>
            <person name="Musashino K."/>
            <person name="Yuuki H."/>
            <person name="Oshima A."/>
            <person name="Sasaki N."/>
            <person name="Aotsuka S."/>
            <person name="Yoshikawa Y."/>
            <person name="Matsunawa H."/>
            <person name="Ichihara T."/>
            <person name="Shiohata N."/>
            <person name="Sano S."/>
            <person name="Moriya S."/>
            <person name="Momiyama H."/>
            <person name="Satoh N."/>
            <person name="Takami S."/>
            <person name="Terashima Y."/>
            <person name="Suzuki O."/>
            <person name="Nakagawa S."/>
            <person name="Senoh A."/>
            <person name="Mizoguchi H."/>
            <person name="Goto Y."/>
            <person name="Shimizu F."/>
            <person name="Wakebe H."/>
            <person name="Hishigaki H."/>
            <person name="Watanabe T."/>
            <person name="Sugiyama A."/>
            <person name="Takemoto M."/>
            <person name="Kawakami B."/>
            <person name="Yamazaki M."/>
            <person name="Watanabe K."/>
            <person name="Kumagai A."/>
            <person name="Itakura S."/>
            <person name="Fukuzumi Y."/>
            <person name="Fujimori Y."/>
            <person name="Komiyama M."/>
            <person name="Tashiro H."/>
            <person name="Tanigami A."/>
            <person name="Fujiwara T."/>
            <person name="Ono T."/>
            <person name="Yamada K."/>
            <person name="Fujii Y."/>
            <person name="Ozaki K."/>
            <person name="Hirao M."/>
            <person name="Ohmori Y."/>
            <person name="Kawabata A."/>
            <person name="Hikiji T."/>
            <person name="Kobatake N."/>
            <person name="Inagaki H."/>
            <person name="Ikema Y."/>
            <person name="Okamoto S."/>
            <person name="Okitani R."/>
            <person name="Kawakami T."/>
            <person name="Noguchi S."/>
            <person name="Itoh T."/>
            <person name="Shigeta K."/>
            <person name="Senba T."/>
            <person name="Matsumura K."/>
            <person name="Nakajima Y."/>
            <person name="Mizuno T."/>
            <person name="Morinaga M."/>
            <person name="Sasaki M."/>
            <person name="Togashi T."/>
            <person name="Oyama M."/>
            <person name="Hata H."/>
            <person name="Watanabe M."/>
            <person name="Komatsu T."/>
            <person name="Mizushima-Sugano J."/>
            <person name="Satoh T."/>
            <person name="Shirai Y."/>
            <person name="Takahashi Y."/>
            <person name="Nakagawa K."/>
            <person name="Okumura K."/>
            <person name="Nagase T."/>
            <person name="Nomura N."/>
            <person name="Kikuchi H."/>
            <person name="Masuho Y."/>
            <person name="Yamashita R."/>
            <person name="Nakai K."/>
            <person name="Yada T."/>
            <person name="Nakamura Y."/>
            <person name="Ohara O."/>
            <person name="Isogai T."/>
            <person name="Sugano S."/>
        </authorList>
    </citation>
    <scope>NUCLEOTIDE SEQUENCE [LARGE SCALE MRNA] (ISOFORM 1)</scope>
    <scope>NUCLEOTIDE SEQUENCE [LARGE SCALE MRNA] OF 1-94 (ISOFORM 2)</scope>
    <source>
        <tissue>Neonatal skin</tissue>
    </source>
</reference>
<reference key="4">
    <citation type="journal article" date="2005" name="Nature">
        <title>Generation and annotation of the DNA sequences of human chromosomes 2 and 4.</title>
        <authorList>
            <person name="Hillier L.W."/>
            <person name="Graves T.A."/>
            <person name="Fulton R.S."/>
            <person name="Fulton L.A."/>
            <person name="Pepin K.H."/>
            <person name="Minx P."/>
            <person name="Wagner-McPherson C."/>
            <person name="Layman D."/>
            <person name="Wylie K."/>
            <person name="Sekhon M."/>
            <person name="Becker M.C."/>
            <person name="Fewell G.A."/>
            <person name="Delehaunty K.D."/>
            <person name="Miner T.L."/>
            <person name="Nash W.E."/>
            <person name="Kremitzki C."/>
            <person name="Oddy L."/>
            <person name="Du H."/>
            <person name="Sun H."/>
            <person name="Bradshaw-Cordum H."/>
            <person name="Ali J."/>
            <person name="Carter J."/>
            <person name="Cordes M."/>
            <person name="Harris A."/>
            <person name="Isak A."/>
            <person name="van Brunt A."/>
            <person name="Nguyen C."/>
            <person name="Du F."/>
            <person name="Courtney L."/>
            <person name="Kalicki J."/>
            <person name="Ozersky P."/>
            <person name="Abbott S."/>
            <person name="Armstrong J."/>
            <person name="Belter E.A."/>
            <person name="Caruso L."/>
            <person name="Cedroni M."/>
            <person name="Cotton M."/>
            <person name="Davidson T."/>
            <person name="Desai A."/>
            <person name="Elliott G."/>
            <person name="Erb T."/>
            <person name="Fronick C."/>
            <person name="Gaige T."/>
            <person name="Haakenson W."/>
            <person name="Haglund K."/>
            <person name="Holmes A."/>
            <person name="Harkins R."/>
            <person name="Kim K."/>
            <person name="Kruchowski S.S."/>
            <person name="Strong C.M."/>
            <person name="Grewal N."/>
            <person name="Goyea E."/>
            <person name="Hou S."/>
            <person name="Levy A."/>
            <person name="Martinka S."/>
            <person name="Mead K."/>
            <person name="McLellan M.D."/>
            <person name="Meyer R."/>
            <person name="Randall-Maher J."/>
            <person name="Tomlinson C."/>
            <person name="Dauphin-Kohlberg S."/>
            <person name="Kozlowicz-Reilly A."/>
            <person name="Shah N."/>
            <person name="Swearengen-Shahid S."/>
            <person name="Snider J."/>
            <person name="Strong J.T."/>
            <person name="Thompson J."/>
            <person name="Yoakum M."/>
            <person name="Leonard S."/>
            <person name="Pearman C."/>
            <person name="Trani L."/>
            <person name="Radionenko M."/>
            <person name="Waligorski J.E."/>
            <person name="Wang C."/>
            <person name="Rock S.M."/>
            <person name="Tin-Wollam A.-M."/>
            <person name="Maupin R."/>
            <person name="Latreille P."/>
            <person name="Wendl M.C."/>
            <person name="Yang S.-P."/>
            <person name="Pohl C."/>
            <person name="Wallis J.W."/>
            <person name="Spieth J."/>
            <person name="Bieri T.A."/>
            <person name="Berkowicz N."/>
            <person name="Nelson J.O."/>
            <person name="Osborne J."/>
            <person name="Ding L."/>
            <person name="Meyer R."/>
            <person name="Sabo A."/>
            <person name="Shotland Y."/>
            <person name="Sinha P."/>
            <person name="Wohldmann P.E."/>
            <person name="Cook L.L."/>
            <person name="Hickenbotham M.T."/>
            <person name="Eldred J."/>
            <person name="Williams D."/>
            <person name="Jones T.A."/>
            <person name="She X."/>
            <person name="Ciccarelli F.D."/>
            <person name="Izaurralde E."/>
            <person name="Taylor J."/>
            <person name="Schmutz J."/>
            <person name="Myers R.M."/>
            <person name="Cox D.R."/>
            <person name="Huang X."/>
            <person name="McPherson J.D."/>
            <person name="Mardis E.R."/>
            <person name="Clifton S.W."/>
            <person name="Warren W.C."/>
            <person name="Chinwalla A.T."/>
            <person name="Eddy S.R."/>
            <person name="Marra M.A."/>
            <person name="Ovcharenko I."/>
            <person name="Furey T.S."/>
            <person name="Miller W."/>
            <person name="Eichler E.E."/>
            <person name="Bork P."/>
            <person name="Suyama M."/>
            <person name="Torrents D."/>
            <person name="Waterston R.H."/>
            <person name="Wilson R.K."/>
        </authorList>
    </citation>
    <scope>NUCLEOTIDE SEQUENCE [LARGE SCALE GENOMIC DNA]</scope>
</reference>
<reference key="5">
    <citation type="journal article" date="2004" name="Genome Res.">
        <title>The status, quality, and expansion of the NIH full-length cDNA project: the Mammalian Gene Collection (MGC).</title>
        <authorList>
            <consortium name="The MGC Project Team"/>
        </authorList>
    </citation>
    <scope>NUCLEOTIDE SEQUENCE [LARGE SCALE MRNA] (ISOFORM 1)</scope>
    <source>
        <tissue>Muscle</tissue>
        <tissue>Skin</tissue>
    </source>
</reference>
<reference key="6">
    <citation type="journal article" date="2008" name="Mol. Cell">
        <title>Kinase-selective enrichment enables quantitative phosphoproteomics of the kinome across the cell cycle.</title>
        <authorList>
            <person name="Daub H."/>
            <person name="Olsen J.V."/>
            <person name="Bairlein M."/>
            <person name="Gnad F."/>
            <person name="Oppermann F.S."/>
            <person name="Korner R."/>
            <person name="Greff Z."/>
            <person name="Keri G."/>
            <person name="Stemmann O."/>
            <person name="Mann M."/>
        </authorList>
    </citation>
    <scope>IDENTIFICATION BY MASS SPECTROMETRY [LARGE SCALE ANALYSIS]</scope>
    <source>
        <tissue>Cervix carcinoma</tissue>
    </source>
</reference>
<reference key="7">
    <citation type="journal article" date="2009" name="Sci. Signal.">
        <title>Quantitative phosphoproteomic analysis of T cell receptor signaling reveals system-wide modulation of protein-protein interactions.</title>
        <authorList>
            <person name="Mayya V."/>
            <person name="Lundgren D.H."/>
            <person name="Hwang S.-I."/>
            <person name="Rezaul K."/>
            <person name="Wu L."/>
            <person name="Eng J.K."/>
            <person name="Rodionov V."/>
            <person name="Han D.K."/>
        </authorList>
    </citation>
    <scope>IDENTIFICATION BY MASS SPECTROMETRY [LARGE SCALE ANALYSIS]</scope>
    <source>
        <tissue>Leukemic T-cell</tissue>
    </source>
</reference>
<reference key="8">
    <citation type="journal article" date="2010" name="Sci. Signal.">
        <title>Quantitative phosphoproteomics reveals widespread full phosphorylation site occupancy during mitosis.</title>
        <authorList>
            <person name="Olsen J.V."/>
            <person name="Vermeulen M."/>
            <person name="Santamaria A."/>
            <person name="Kumar C."/>
            <person name="Miller M.L."/>
            <person name="Jensen L.J."/>
            <person name="Gnad F."/>
            <person name="Cox J."/>
            <person name="Jensen T.S."/>
            <person name="Nigg E.A."/>
            <person name="Brunak S."/>
            <person name="Mann M."/>
        </authorList>
    </citation>
    <scope>IDENTIFICATION BY MASS SPECTROMETRY [LARGE SCALE ANALYSIS]</scope>
    <source>
        <tissue>Cervix carcinoma</tissue>
    </source>
</reference>
<reference key="9">
    <citation type="journal article" date="2011" name="BMC Syst. Biol.">
        <title>Initial characterization of the human central proteome.</title>
        <authorList>
            <person name="Burkard T.R."/>
            <person name="Planyavsky M."/>
            <person name="Kaupe I."/>
            <person name="Breitwieser F.P."/>
            <person name="Buerckstuemmer T."/>
            <person name="Bennett K.L."/>
            <person name="Superti-Furga G."/>
            <person name="Colinge J."/>
        </authorList>
    </citation>
    <scope>IDENTIFICATION BY MASS SPECTROMETRY [LARGE SCALE ANALYSIS]</scope>
</reference>
<reference key="10">
    <citation type="journal article" date="2012" name="Cell">
        <title>Cyclin F-mediated degradation of ribonucleotide reductase M2 controls genome integrity and DNA repair.</title>
        <authorList>
            <person name="D'Angiolella V."/>
            <person name="Donato V."/>
            <person name="Forrester F.M."/>
            <person name="Jeong Y.T."/>
            <person name="Pellacani C."/>
            <person name="Kudo Y."/>
            <person name="Saraf A."/>
            <person name="Florens L."/>
            <person name="Washburn M.P."/>
            <person name="Pagano M."/>
        </authorList>
    </citation>
    <scope>IDENTIFICATION BY MASS SPECTROMETRY</scope>
    <scope>INTERACTION WITH CCNF</scope>
    <scope>SUBCELLULAR LOCATION</scope>
    <scope>INDUCTION BY DNA DAMAGE</scope>
    <scope>PHOSPHORYLATION AT THR-33</scope>
    <scope>UBIQUITINATION</scope>
    <scope>MUTAGENESIS OF THR-33 AND 49-ARG--ILE-51</scope>
</reference>
<accession>P31350</accession>
<accession>B2R9B5</accession>
<accession>J3KP43</accession>
<accession>Q5WRU7</accession>
<proteinExistence type="evidence at protein level"/>
<name>RIR2_HUMAN</name>
<evidence type="ECO:0000250" key="1"/>
<evidence type="ECO:0000250" key="2">
    <source>
        <dbReference type="UniProtKB" id="P11157"/>
    </source>
</evidence>
<evidence type="ECO:0000255" key="3">
    <source>
        <dbReference type="PROSITE-ProRule" id="PRU10014"/>
    </source>
</evidence>
<evidence type="ECO:0000269" key="4">
    <source>
    </source>
</evidence>
<evidence type="ECO:0000303" key="5">
    <source>
    </source>
</evidence>
<evidence type="ECO:0000305" key="6"/>
<evidence type="ECO:0007829" key="7">
    <source>
        <dbReference type="PDB" id="2UW2"/>
    </source>
</evidence>
<evidence type="ECO:0007829" key="8">
    <source>
        <dbReference type="PDB" id="3OLJ"/>
    </source>
</evidence>
<sequence>MLSLRVPLAPITDPQQLQLSPLKGLSLVDKENTPPALSGTRVLASKTARRIFQEPTEPKTKAAAPGVEDEPLLRENPRRFVIFPIEYHDIWQMYKKAEASFWTAEEVDLSKDIQHWESLKPEERYFISHVLAFFAASDGIVNENLVERFSQEVQITEARCFYGFQIAMENIHSEMYSLLIDTYIKDPKEREFLFNAIETMPCVKKKADWALRWIGDKEATYGERVVAFAAVEGIFFSGSFASIFWLKKRGLMPGLTFSNELISRDEGLHCDFACLMFKHLVHKPSEERVREIIINAVRIEQEFLTEALPVKLIGMNCTLMKQYIEFVADRLMLELGFSKVFRVENPFDFMENISLEGKTNFFEKRVGEYQRMGVMSSPTENSFTLDADF</sequence>
<organism>
    <name type="scientific">Homo sapiens</name>
    <name type="common">Human</name>
    <dbReference type="NCBI Taxonomy" id="9606"/>
    <lineage>
        <taxon>Eukaryota</taxon>
        <taxon>Metazoa</taxon>
        <taxon>Chordata</taxon>
        <taxon>Craniata</taxon>
        <taxon>Vertebrata</taxon>
        <taxon>Euteleostomi</taxon>
        <taxon>Mammalia</taxon>
        <taxon>Eutheria</taxon>
        <taxon>Euarchontoglires</taxon>
        <taxon>Primates</taxon>
        <taxon>Haplorrhini</taxon>
        <taxon>Catarrhini</taxon>
        <taxon>Hominidae</taxon>
        <taxon>Homo</taxon>
    </lineage>
</organism>
<feature type="chain" id="PRO_0000190447" description="Ribonucleoside-diphosphate reductase subunit M2">
    <location>
        <begin position="1"/>
        <end position="389"/>
    </location>
</feature>
<feature type="short sequence motif" description="Cy" evidence="4">
    <location>
        <begin position="49"/>
        <end position="51"/>
    </location>
</feature>
<feature type="active site" evidence="3">
    <location>
        <position position="176"/>
    </location>
</feature>
<feature type="binding site" evidence="3">
    <location>
        <position position="138"/>
    </location>
    <ligand>
        <name>Fe cation</name>
        <dbReference type="ChEBI" id="CHEBI:24875"/>
        <label>1</label>
    </ligand>
</feature>
<feature type="binding site" evidence="3">
    <location>
        <position position="169"/>
    </location>
    <ligand>
        <name>Fe cation</name>
        <dbReference type="ChEBI" id="CHEBI:24875"/>
        <label>1</label>
    </ligand>
</feature>
<feature type="binding site" evidence="1">
    <location>
        <position position="169"/>
    </location>
    <ligand>
        <name>Fe cation</name>
        <dbReference type="ChEBI" id="CHEBI:24875"/>
        <label>2</label>
    </ligand>
</feature>
<feature type="binding site" evidence="3">
    <location>
        <position position="172"/>
    </location>
    <ligand>
        <name>Fe cation</name>
        <dbReference type="ChEBI" id="CHEBI:24875"/>
        <label>1</label>
    </ligand>
</feature>
<feature type="binding site" evidence="1">
    <location>
        <position position="232"/>
    </location>
    <ligand>
        <name>Fe cation</name>
        <dbReference type="ChEBI" id="CHEBI:24875"/>
        <label>2</label>
    </ligand>
</feature>
<feature type="binding site" evidence="1">
    <location>
        <position position="266"/>
    </location>
    <ligand>
        <name>Fe cation</name>
        <dbReference type="ChEBI" id="CHEBI:24875"/>
        <label>2</label>
    </ligand>
</feature>
<feature type="binding site" evidence="1">
    <location>
        <position position="269"/>
    </location>
    <ligand>
        <name>Fe cation</name>
        <dbReference type="ChEBI" id="CHEBI:24875"/>
        <label>2</label>
    </ligand>
</feature>
<feature type="modified residue" description="Phosphoserine" evidence="2">
    <location>
        <position position="20"/>
    </location>
</feature>
<feature type="modified residue" description="Phosphothreonine" evidence="4">
    <location>
        <position position="33"/>
    </location>
</feature>
<feature type="splice variant" id="VSP_044917" description="In isoform 2." evidence="5">
    <original>M</original>
    <variation>MGRVGGMAQPMGRAGAPKPMGRAGSARRGRFKGCWSEGSPVHPVPAVLSWLLALLRCASTM</variation>
    <location>
        <position position="1"/>
    </location>
</feature>
<feature type="mutagenesis site" description="Enhances inhibitory effect on Wnt signaling.">
    <original>S</original>
    <variation>A</variation>
    <location>
        <position position="20"/>
    </location>
</feature>
<feature type="mutagenesis site" description="Prevents inhibitory effect on Wnt signaling.">
    <original>S</original>
    <variation>E</variation>
    <location>
        <position position="20"/>
    </location>
</feature>
<feature type="mutagenesis site" description="Strongly reduces the interaction with CCNF. Lack of proteasomal degradation. Increase in the cellular concentration of dATP and dGTP, but not dCTP and dTTP, leading to an imbalance in dNTP pools and genome instability." evidence="4">
    <original>T</original>
    <variation>A</variation>
    <location>
        <position position="33"/>
    </location>
</feature>
<feature type="mutagenesis site" description="Abolishes the interaction with CCNF. Lack of proteasomal degradation. Increase in the cellular concentration of dATP and dGTP, but not dCTP and dTTP, leading to an imbalance in dNTP pools and genome instability." evidence="4">
    <original>RRI</original>
    <variation>ARA</variation>
    <location>
        <begin position="49"/>
        <end position="51"/>
    </location>
</feature>
<feature type="turn" evidence="8">
    <location>
        <begin position="71"/>
        <end position="73"/>
    </location>
</feature>
<feature type="turn" evidence="8">
    <location>
        <begin position="77"/>
        <end position="80"/>
    </location>
</feature>
<feature type="helix" evidence="8">
    <location>
        <begin position="88"/>
        <end position="99"/>
    </location>
</feature>
<feature type="helix" evidence="8">
    <location>
        <begin position="104"/>
        <end position="106"/>
    </location>
</feature>
<feature type="helix" evidence="7">
    <location>
        <begin position="110"/>
        <end position="112"/>
    </location>
</feature>
<feature type="helix" evidence="8">
    <location>
        <begin position="113"/>
        <end position="118"/>
    </location>
</feature>
<feature type="helix" evidence="8">
    <location>
        <begin position="121"/>
        <end position="147"/>
    </location>
</feature>
<feature type="helix" evidence="8">
    <location>
        <begin position="149"/>
        <end position="152"/>
    </location>
</feature>
<feature type="helix" evidence="8">
    <location>
        <begin position="156"/>
        <end position="183"/>
    </location>
</feature>
<feature type="helix" evidence="8">
    <location>
        <begin position="187"/>
        <end position="194"/>
    </location>
</feature>
<feature type="helix" evidence="8">
    <location>
        <begin position="196"/>
        <end position="199"/>
    </location>
</feature>
<feature type="helix" evidence="8">
    <location>
        <begin position="201"/>
        <end position="203"/>
    </location>
</feature>
<feature type="helix" evidence="8">
    <location>
        <begin position="204"/>
        <end position="215"/>
    </location>
</feature>
<feature type="strand" evidence="8">
    <location>
        <begin position="217"/>
        <end position="219"/>
    </location>
</feature>
<feature type="helix" evidence="8">
    <location>
        <begin position="221"/>
        <end position="233"/>
    </location>
</feature>
<feature type="turn" evidence="8">
    <location>
        <begin position="234"/>
        <end position="236"/>
    </location>
</feature>
<feature type="helix" evidence="8">
    <location>
        <begin position="237"/>
        <end position="248"/>
    </location>
</feature>
<feature type="helix" evidence="8">
    <location>
        <begin position="253"/>
        <end position="278"/>
    </location>
</feature>
<feature type="helix" evidence="8">
    <location>
        <begin position="286"/>
        <end position="305"/>
    </location>
</feature>
<feature type="helix" evidence="8">
    <location>
        <begin position="310"/>
        <end position="313"/>
    </location>
</feature>
<feature type="helix" evidence="8">
    <location>
        <begin position="317"/>
        <end position="335"/>
    </location>
</feature>
<feature type="sequence conflict" description="In Ref. 3; DA477511." evidence="6" ref="3">
    <original>R</original>
    <variation>H</variation>
    <location sequence="P31350-2">
        <position position="28"/>
    </location>
</feature>
<feature type="sequence conflict" description="In Ref. 3; DA477511." evidence="6" ref="3">
    <original>S</original>
    <variation>A</variation>
    <location sequence="P31350-2">
        <position position="59"/>
    </location>
</feature>
<gene>
    <name type="primary">RRM2</name>
    <name type="synonym">RR2</name>
</gene>
<protein>
    <recommendedName>
        <fullName>Ribonucleoside-diphosphate reductase subunit M2</fullName>
        <ecNumber>1.17.4.1</ecNumber>
    </recommendedName>
    <alternativeName>
        <fullName>Ribonucleotide reductase small chain</fullName>
    </alternativeName>
    <alternativeName>
        <fullName>Ribonucleotide reductase small subunit</fullName>
    </alternativeName>
</protein>
<keyword id="KW-0002">3D-structure</keyword>
<keyword id="KW-0025">Alternative splicing</keyword>
<keyword id="KW-0963">Cytoplasm</keyword>
<keyword id="KW-0215">Deoxyribonucleotide synthesis</keyword>
<keyword id="KW-0408">Iron</keyword>
<keyword id="KW-0479">Metal-binding</keyword>
<keyword id="KW-0539">Nucleus</keyword>
<keyword id="KW-0560">Oxidoreductase</keyword>
<keyword id="KW-0597">Phosphoprotein</keyword>
<keyword id="KW-1267">Proteomics identification</keyword>
<keyword id="KW-1185">Reference proteome</keyword>
<keyword id="KW-0832">Ubl conjugation</keyword>
<dbReference type="EC" id="1.17.4.1"/>
<dbReference type="EMBL" id="X59618">
    <property type="protein sequence ID" value="CAA42181.1"/>
    <property type="molecule type" value="mRNA"/>
</dbReference>
<dbReference type="EMBL" id="S40301">
    <property type="protein sequence ID" value="AAA09577.1"/>
    <property type="molecule type" value="mRNA"/>
</dbReference>
<dbReference type="EMBL" id="AY032750">
    <property type="protein sequence ID" value="AAK51163.1"/>
    <property type="molecule type" value="Genomic_DNA"/>
</dbReference>
<dbReference type="EMBL" id="AK313719">
    <property type="protein sequence ID" value="BAG36462.1"/>
    <property type="molecule type" value="mRNA"/>
</dbReference>
<dbReference type="EMBL" id="DA477511">
    <property type="status" value="NOT_ANNOTATED_CDS"/>
    <property type="molecule type" value="mRNA"/>
</dbReference>
<dbReference type="EMBL" id="AC104794">
    <property type="protein sequence ID" value="AAX93099.1"/>
    <property type="molecule type" value="Genomic_DNA"/>
</dbReference>
<dbReference type="EMBL" id="AC118058">
    <property type="status" value="NOT_ANNOTATED_CDS"/>
    <property type="molecule type" value="Genomic_DNA"/>
</dbReference>
<dbReference type="EMBL" id="BC001886">
    <property type="protein sequence ID" value="AAH01886.1"/>
    <property type="molecule type" value="mRNA"/>
</dbReference>
<dbReference type="EMBL" id="BC030154">
    <property type="protein sequence ID" value="AAH30154.1"/>
    <property type="molecule type" value="mRNA"/>
</dbReference>
<dbReference type="CCDS" id="CCDS1669.1">
    <molecule id="P31350-1"/>
</dbReference>
<dbReference type="CCDS" id="CCDS54334.1">
    <molecule id="P31350-2"/>
</dbReference>
<dbReference type="PIR" id="S25854">
    <property type="entry name" value="S25854"/>
</dbReference>
<dbReference type="RefSeq" id="NP_001025.1">
    <molecule id="P31350-1"/>
    <property type="nucleotide sequence ID" value="NM_001034.4"/>
</dbReference>
<dbReference type="RefSeq" id="NP_001159403.1">
    <molecule id="P31350-2"/>
    <property type="nucleotide sequence ID" value="NM_001165931.1"/>
</dbReference>
<dbReference type="PDB" id="2UW2">
    <property type="method" value="X-ray"/>
    <property type="resolution" value="2.80 A"/>
    <property type="chains" value="A=60-389"/>
</dbReference>
<dbReference type="PDB" id="3OLJ">
    <property type="method" value="X-ray"/>
    <property type="resolution" value="2.10 A"/>
    <property type="chains" value="A/B/C/D=66-350"/>
</dbReference>
<dbReference type="PDB" id="3VPM">
    <property type="method" value="X-ray"/>
    <property type="resolution" value="2.70 A"/>
    <property type="chains" value="A/B=66-350"/>
</dbReference>
<dbReference type="PDB" id="3VPN">
    <property type="method" value="X-ray"/>
    <property type="resolution" value="2.25 A"/>
    <property type="chains" value="A/B=66-350"/>
</dbReference>
<dbReference type="PDB" id="3VPO">
    <property type="method" value="X-ray"/>
    <property type="resolution" value="2.30 A"/>
    <property type="chains" value="A/B=66-350"/>
</dbReference>
<dbReference type="PDBsum" id="2UW2"/>
<dbReference type="PDBsum" id="3OLJ"/>
<dbReference type="PDBsum" id="3VPM"/>
<dbReference type="PDBsum" id="3VPN"/>
<dbReference type="PDBsum" id="3VPO"/>
<dbReference type="SMR" id="P31350"/>
<dbReference type="BioGRID" id="112155">
    <property type="interactions" value="122"/>
</dbReference>
<dbReference type="ComplexPortal" id="CPX-2194">
    <property type="entry name" value="Ribonucleoside-diphosphate reductase RR1 complex, RRM2 variant"/>
</dbReference>
<dbReference type="CORUM" id="P31350"/>
<dbReference type="DIP" id="DIP-24232N"/>
<dbReference type="FunCoup" id="P31350">
    <property type="interactions" value="1220"/>
</dbReference>
<dbReference type="IntAct" id="P31350">
    <property type="interactions" value="51"/>
</dbReference>
<dbReference type="MINT" id="P31350"/>
<dbReference type="STRING" id="9606.ENSP00000353770"/>
<dbReference type="BindingDB" id="P31350"/>
<dbReference type="ChEMBL" id="CHEMBL1954"/>
<dbReference type="DrugBank" id="DB00242">
    <property type="generic name" value="Cladribine"/>
</dbReference>
<dbReference type="DrugBank" id="DB00631">
    <property type="generic name" value="Clofarabine"/>
</dbReference>
<dbReference type="DrugBank" id="DB12948">
    <property type="generic name" value="Didox"/>
</dbReference>
<dbReference type="DrugBank" id="DB05420">
    <property type="generic name" value="Gallium maltolate"/>
</dbReference>
<dbReference type="DrugBank" id="DB05260">
    <property type="generic name" value="Gallium nitrate"/>
</dbReference>
<dbReference type="DrugBank" id="DB00441">
    <property type="generic name" value="Gemcitabine"/>
</dbReference>
<dbReference type="DrugBank" id="DB12564">
    <property type="generic name" value="Gemcitabine elaidate"/>
</dbReference>
<dbReference type="DrugBank" id="DB05801">
    <property type="generic name" value="GTI 2040"/>
</dbReference>
<dbReference type="DrugBank" id="DB01005">
    <property type="generic name" value="Hydroxyurea"/>
</dbReference>
<dbReference type="DrugBank" id="DB05003">
    <property type="generic name" value="Imexon"/>
</dbReference>
<dbReference type="DrugBank" id="DB12906">
    <property type="generic name" value="LY-2334737"/>
</dbReference>
<dbReference type="DrugBank" id="DB05428">
    <property type="generic name" value="Motexafin gadolinium"/>
</dbReference>
<dbReference type="DrugBank" id="DB06433">
    <property type="generic name" value="Tezacitabine"/>
</dbReference>
<dbReference type="DrugBank" id="DB11940">
    <property type="generic name" value="Triapine"/>
</dbReference>
<dbReference type="DrugCentral" id="P31350"/>
<dbReference type="GuidetoPHARMACOLOGY" id="2631"/>
<dbReference type="GlyGen" id="P31350">
    <property type="glycosylation" value="1 site, 1 O-linked glycan (1 site)"/>
</dbReference>
<dbReference type="iPTMnet" id="P31350"/>
<dbReference type="MetOSite" id="P31350"/>
<dbReference type="PhosphoSitePlus" id="P31350"/>
<dbReference type="BioMuta" id="RRM2"/>
<dbReference type="DMDM" id="400979"/>
<dbReference type="CPTAC" id="CPTAC-3255"/>
<dbReference type="CPTAC" id="CPTAC-725"/>
<dbReference type="jPOST" id="P31350"/>
<dbReference type="MassIVE" id="P31350"/>
<dbReference type="PaxDb" id="9606-ENSP00000353770"/>
<dbReference type="PeptideAtlas" id="P31350"/>
<dbReference type="ProteomicsDB" id="54784">
    <molecule id="P31350-1"/>
</dbReference>
<dbReference type="Pumba" id="P31350"/>
<dbReference type="ABCD" id="P31350">
    <property type="antibodies" value="2 sequenced antibodies"/>
</dbReference>
<dbReference type="Antibodypedia" id="26663">
    <property type="antibodies" value="323 antibodies from 37 providers"/>
</dbReference>
<dbReference type="CPTC" id="P31350">
    <property type="antibodies" value="2 antibodies"/>
</dbReference>
<dbReference type="DNASU" id="6241"/>
<dbReference type="Ensembl" id="ENST00000304567.10">
    <molecule id="P31350-1"/>
    <property type="protein sequence ID" value="ENSP00000302955.4"/>
    <property type="gene ID" value="ENSG00000171848.16"/>
</dbReference>
<dbReference type="Ensembl" id="ENST00000360566.6">
    <molecule id="P31350-2"/>
    <property type="protein sequence ID" value="ENSP00000353770.2"/>
    <property type="gene ID" value="ENSG00000171848.16"/>
</dbReference>
<dbReference type="Ensembl" id="ENST00000641198.1">
    <molecule id="P31350-1"/>
    <property type="protein sequence ID" value="ENSP00000493399.1"/>
    <property type="gene ID" value="ENSG00000171848.16"/>
</dbReference>
<dbReference type="GeneID" id="6241"/>
<dbReference type="KEGG" id="hsa:6241"/>
<dbReference type="MANE-Select" id="ENST00000304567.10">
    <property type="protein sequence ID" value="ENSP00000302955.4"/>
    <property type="RefSeq nucleotide sequence ID" value="NM_001034.4"/>
    <property type="RefSeq protein sequence ID" value="NP_001025.1"/>
</dbReference>
<dbReference type="UCSC" id="uc021vdr.3">
    <molecule id="P31350-1"/>
    <property type="organism name" value="human"/>
</dbReference>
<dbReference type="AGR" id="HGNC:10452"/>
<dbReference type="CTD" id="6241"/>
<dbReference type="DisGeNET" id="6241"/>
<dbReference type="GeneCards" id="RRM2"/>
<dbReference type="HGNC" id="HGNC:10452">
    <property type="gene designation" value="RRM2"/>
</dbReference>
<dbReference type="HPA" id="ENSG00000171848">
    <property type="expression patterns" value="Group enriched (bone marrow, esophagus, intestine, lymphoid tissue)"/>
</dbReference>
<dbReference type="MIM" id="180390">
    <property type="type" value="gene"/>
</dbReference>
<dbReference type="neXtProt" id="NX_P31350"/>
<dbReference type="OpenTargets" id="ENSG00000171848"/>
<dbReference type="PharmGKB" id="PA299"/>
<dbReference type="VEuPathDB" id="HostDB:ENSG00000171848"/>
<dbReference type="eggNOG" id="KOG1567">
    <property type="taxonomic scope" value="Eukaryota"/>
</dbReference>
<dbReference type="GeneTree" id="ENSGT00390000013305"/>
<dbReference type="HOGENOM" id="CLU_035339_0_1_1"/>
<dbReference type="InParanoid" id="P31350"/>
<dbReference type="OMA" id="SNPFPWM"/>
<dbReference type="OrthoDB" id="10248373at2759"/>
<dbReference type="PAN-GO" id="P31350">
    <property type="GO annotations" value="3 GO annotations based on evolutionary models"/>
</dbReference>
<dbReference type="PhylomeDB" id="P31350"/>
<dbReference type="TreeFam" id="TF300465"/>
<dbReference type="BioCyc" id="MetaCyc:HS10398-MONOMER"/>
<dbReference type="BRENDA" id="1.17.4.1">
    <property type="organism ID" value="2681"/>
</dbReference>
<dbReference type="PathwayCommons" id="P31350"/>
<dbReference type="Reactome" id="R-HSA-499943">
    <property type="pathway name" value="Interconversion of nucleotide di- and triphosphates"/>
</dbReference>
<dbReference type="Reactome" id="R-HSA-69205">
    <property type="pathway name" value="G1/S-Specific Transcription"/>
</dbReference>
<dbReference type="Reactome" id="R-HSA-8953750">
    <property type="pathway name" value="Transcriptional Regulation by E2F6"/>
</dbReference>
<dbReference type="SignaLink" id="P31350"/>
<dbReference type="SIGNOR" id="P31350"/>
<dbReference type="BioGRID-ORCS" id="6241">
    <property type="hits" value="846 hits in 1195 CRISPR screens"/>
</dbReference>
<dbReference type="ChiTaRS" id="RRM2">
    <property type="organism name" value="human"/>
</dbReference>
<dbReference type="EvolutionaryTrace" id="P31350"/>
<dbReference type="GeneWiki" id="RRM2"/>
<dbReference type="GenomeRNAi" id="6241"/>
<dbReference type="Pharos" id="P31350">
    <property type="development level" value="Tclin"/>
</dbReference>
<dbReference type="PRO" id="PR:P31350"/>
<dbReference type="Proteomes" id="UP000005640">
    <property type="component" value="Chromosome 2"/>
</dbReference>
<dbReference type="RNAct" id="P31350">
    <property type="molecule type" value="protein"/>
</dbReference>
<dbReference type="Bgee" id="ENSG00000171848">
    <property type="expression patterns" value="Expressed in secondary oocyte and 153 other cell types or tissues"/>
</dbReference>
<dbReference type="ExpressionAtlas" id="P31350">
    <property type="expression patterns" value="baseline and differential"/>
</dbReference>
<dbReference type="GO" id="GO:0005829">
    <property type="term" value="C:cytosol"/>
    <property type="evidence" value="ECO:0000314"/>
    <property type="project" value="HPA"/>
</dbReference>
<dbReference type="GO" id="GO:0005654">
    <property type="term" value="C:nucleoplasm"/>
    <property type="evidence" value="ECO:0000314"/>
    <property type="project" value="HPA"/>
</dbReference>
<dbReference type="GO" id="GO:0005971">
    <property type="term" value="C:ribonucleoside-diphosphate reductase complex"/>
    <property type="evidence" value="ECO:0000353"/>
    <property type="project" value="ComplexPortal"/>
</dbReference>
<dbReference type="GO" id="GO:0008199">
    <property type="term" value="F:ferric iron binding"/>
    <property type="evidence" value="ECO:0007669"/>
    <property type="project" value="Ensembl"/>
</dbReference>
<dbReference type="GO" id="GO:0042803">
    <property type="term" value="F:protein homodimerization activity"/>
    <property type="evidence" value="ECO:0007669"/>
    <property type="project" value="Ensembl"/>
</dbReference>
<dbReference type="GO" id="GO:0004748">
    <property type="term" value="F:ribonucleoside-diphosphate reductase activity, thioredoxin disulfide as acceptor"/>
    <property type="evidence" value="ECO:0000250"/>
    <property type="project" value="UniProtKB"/>
</dbReference>
<dbReference type="GO" id="GO:0009265">
    <property type="term" value="P:2'-deoxyribonucleotide biosynthetic process"/>
    <property type="evidence" value="ECO:0000314"/>
    <property type="project" value="ComplexPortal"/>
</dbReference>
<dbReference type="GO" id="GO:0001824">
    <property type="term" value="P:blastocyst development"/>
    <property type="evidence" value="ECO:0007669"/>
    <property type="project" value="Ensembl"/>
</dbReference>
<dbReference type="GO" id="GO:0009263">
    <property type="term" value="P:deoxyribonucleotide biosynthetic process"/>
    <property type="evidence" value="ECO:0000250"/>
    <property type="project" value="UniProtKB"/>
</dbReference>
<dbReference type="GO" id="GO:1900087">
    <property type="term" value="P:positive regulation of G1/S transition of mitotic cell cycle"/>
    <property type="evidence" value="ECO:0000314"/>
    <property type="project" value="ComplexPortal"/>
</dbReference>
<dbReference type="GO" id="GO:0051290">
    <property type="term" value="P:protein heterotetramerization"/>
    <property type="evidence" value="ECO:0007669"/>
    <property type="project" value="Ensembl"/>
</dbReference>
<dbReference type="GO" id="GO:0009185">
    <property type="term" value="P:ribonucleoside diphosphate metabolic process"/>
    <property type="evidence" value="ECO:0000314"/>
    <property type="project" value="ComplexPortal"/>
</dbReference>
<dbReference type="CDD" id="cd01049">
    <property type="entry name" value="RNRR2"/>
    <property type="match status" value="1"/>
</dbReference>
<dbReference type="FunFam" id="1.10.620.20:FF:000004">
    <property type="entry name" value="Ribonucleoside-diphosphate reductase subunit M2 B"/>
    <property type="match status" value="1"/>
</dbReference>
<dbReference type="Gene3D" id="1.10.620.20">
    <property type="entry name" value="Ribonucleotide Reductase, subunit A"/>
    <property type="match status" value="1"/>
</dbReference>
<dbReference type="InterPro" id="IPR009078">
    <property type="entry name" value="Ferritin-like_SF"/>
</dbReference>
<dbReference type="InterPro" id="IPR012348">
    <property type="entry name" value="RNR-like"/>
</dbReference>
<dbReference type="InterPro" id="IPR033909">
    <property type="entry name" value="RNR_small"/>
</dbReference>
<dbReference type="InterPro" id="IPR030475">
    <property type="entry name" value="RNR_small_AS"/>
</dbReference>
<dbReference type="InterPro" id="IPR000358">
    <property type="entry name" value="RNR_small_fam"/>
</dbReference>
<dbReference type="PANTHER" id="PTHR23409">
    <property type="entry name" value="RIBONUCLEOSIDE-DIPHOSPHATE REDUCTASE SMALL CHAIN"/>
    <property type="match status" value="1"/>
</dbReference>
<dbReference type="PANTHER" id="PTHR23409:SF20">
    <property type="entry name" value="RIBONUCLEOSIDE-DIPHOSPHATE REDUCTASE SUBUNIT M2"/>
    <property type="match status" value="1"/>
</dbReference>
<dbReference type="Pfam" id="PF00268">
    <property type="entry name" value="Ribonuc_red_sm"/>
    <property type="match status" value="1"/>
</dbReference>
<dbReference type="SUPFAM" id="SSF47240">
    <property type="entry name" value="Ferritin-like"/>
    <property type="match status" value="1"/>
</dbReference>
<dbReference type="PROSITE" id="PS00368">
    <property type="entry name" value="RIBORED_SMALL"/>
    <property type="match status" value="1"/>
</dbReference>